<name>RIMP_AGRFC</name>
<organism>
    <name type="scientific">Agrobacterium fabrum (strain C58 / ATCC 33970)</name>
    <name type="common">Agrobacterium tumefaciens (strain C58)</name>
    <dbReference type="NCBI Taxonomy" id="176299"/>
    <lineage>
        <taxon>Bacteria</taxon>
        <taxon>Pseudomonadati</taxon>
        <taxon>Pseudomonadota</taxon>
        <taxon>Alphaproteobacteria</taxon>
        <taxon>Hyphomicrobiales</taxon>
        <taxon>Rhizobiaceae</taxon>
        <taxon>Rhizobium/Agrobacterium group</taxon>
        <taxon>Agrobacterium</taxon>
        <taxon>Agrobacterium tumefaciens complex</taxon>
    </lineage>
</organism>
<accession>Q8UJ48</accession>
<comment type="function">
    <text evidence="1">Required for maturation of 30S ribosomal subunits.</text>
</comment>
<comment type="subcellular location">
    <subcellularLocation>
        <location evidence="1">Cytoplasm</location>
    </subcellularLocation>
</comment>
<comment type="similarity">
    <text evidence="1">Belongs to the RimP family.</text>
</comment>
<protein>
    <recommendedName>
        <fullName evidence="1">Ribosome maturation factor RimP</fullName>
    </recommendedName>
</protein>
<dbReference type="EMBL" id="AE007869">
    <property type="protein sequence ID" value="AAK85910.1"/>
    <property type="molecule type" value="Genomic_DNA"/>
</dbReference>
<dbReference type="PIR" id="AE2587">
    <property type="entry name" value="AE2587"/>
</dbReference>
<dbReference type="PIR" id="E97369">
    <property type="entry name" value="E97369"/>
</dbReference>
<dbReference type="RefSeq" id="NP_353125.1">
    <property type="nucleotide sequence ID" value="NC_003062.2"/>
</dbReference>
<dbReference type="RefSeq" id="WP_010970647.1">
    <property type="nucleotide sequence ID" value="NC_003062.2"/>
</dbReference>
<dbReference type="SMR" id="Q8UJ48"/>
<dbReference type="STRING" id="176299.Atu0090"/>
<dbReference type="EnsemblBacteria" id="AAK85910">
    <property type="protein sequence ID" value="AAK85910"/>
    <property type="gene ID" value="Atu0090"/>
</dbReference>
<dbReference type="GeneID" id="1132128"/>
<dbReference type="KEGG" id="atu:Atu0090"/>
<dbReference type="PATRIC" id="fig|176299.10.peg.83"/>
<dbReference type="eggNOG" id="COG0779">
    <property type="taxonomic scope" value="Bacteria"/>
</dbReference>
<dbReference type="HOGENOM" id="CLU_070525_0_1_5"/>
<dbReference type="OrthoDB" id="9805006at2"/>
<dbReference type="PhylomeDB" id="Q8UJ48"/>
<dbReference type="BioCyc" id="AGRO:ATU0090-MONOMER"/>
<dbReference type="Proteomes" id="UP000000813">
    <property type="component" value="Chromosome circular"/>
</dbReference>
<dbReference type="GO" id="GO:0005829">
    <property type="term" value="C:cytosol"/>
    <property type="evidence" value="ECO:0007669"/>
    <property type="project" value="TreeGrafter"/>
</dbReference>
<dbReference type="GO" id="GO:0000028">
    <property type="term" value="P:ribosomal small subunit assembly"/>
    <property type="evidence" value="ECO:0007669"/>
    <property type="project" value="TreeGrafter"/>
</dbReference>
<dbReference type="GO" id="GO:0006412">
    <property type="term" value="P:translation"/>
    <property type="evidence" value="ECO:0007669"/>
    <property type="project" value="TreeGrafter"/>
</dbReference>
<dbReference type="CDD" id="cd01734">
    <property type="entry name" value="YlxS_C"/>
    <property type="match status" value="1"/>
</dbReference>
<dbReference type="Gene3D" id="2.30.30.180">
    <property type="entry name" value="Ribosome maturation factor RimP, C-terminal domain"/>
    <property type="match status" value="1"/>
</dbReference>
<dbReference type="Gene3D" id="3.30.300.70">
    <property type="entry name" value="RimP-like superfamily, N-terminal"/>
    <property type="match status" value="1"/>
</dbReference>
<dbReference type="HAMAP" id="MF_01077">
    <property type="entry name" value="RimP"/>
    <property type="match status" value="1"/>
</dbReference>
<dbReference type="InterPro" id="IPR003728">
    <property type="entry name" value="Ribosome_maturation_RimP"/>
</dbReference>
<dbReference type="InterPro" id="IPR028998">
    <property type="entry name" value="RimP_C"/>
</dbReference>
<dbReference type="InterPro" id="IPR036847">
    <property type="entry name" value="RimP_C_sf"/>
</dbReference>
<dbReference type="InterPro" id="IPR028989">
    <property type="entry name" value="RimP_N"/>
</dbReference>
<dbReference type="InterPro" id="IPR035956">
    <property type="entry name" value="RimP_N_sf"/>
</dbReference>
<dbReference type="NCBIfam" id="NF000932">
    <property type="entry name" value="PRK00092.2-5"/>
    <property type="match status" value="1"/>
</dbReference>
<dbReference type="PANTHER" id="PTHR33867">
    <property type="entry name" value="RIBOSOME MATURATION FACTOR RIMP"/>
    <property type="match status" value="1"/>
</dbReference>
<dbReference type="PANTHER" id="PTHR33867:SF1">
    <property type="entry name" value="RIBOSOME MATURATION FACTOR RIMP"/>
    <property type="match status" value="1"/>
</dbReference>
<dbReference type="Pfam" id="PF17384">
    <property type="entry name" value="DUF150_C"/>
    <property type="match status" value="1"/>
</dbReference>
<dbReference type="Pfam" id="PF02576">
    <property type="entry name" value="RimP_N"/>
    <property type="match status" value="1"/>
</dbReference>
<dbReference type="SUPFAM" id="SSF74942">
    <property type="entry name" value="YhbC-like, C-terminal domain"/>
    <property type="match status" value="1"/>
</dbReference>
<dbReference type="SUPFAM" id="SSF75420">
    <property type="entry name" value="YhbC-like, N-terminal domain"/>
    <property type="match status" value="1"/>
</dbReference>
<sequence length="198" mass="22083">MADTAQEPRLITETGIDQRIAEIIEPVLTGMGYLLVRVRLSNQNGMTLQVMAEREDGTMNVQDCEAISMAISPVLDVEDPVEKAYHLEVSSPGIDRPMVRKTDFTRWQGHLVKVETSILVENRKRFRGKIVEVDADSFKLERDQIAYGEEPTVVVPFNALSDAKLILTDDLIRDALRADKAAKAAAANQNDENEADED</sequence>
<evidence type="ECO:0000255" key="1">
    <source>
        <dbReference type="HAMAP-Rule" id="MF_01077"/>
    </source>
</evidence>
<reference key="1">
    <citation type="journal article" date="2001" name="Science">
        <title>The genome of the natural genetic engineer Agrobacterium tumefaciens C58.</title>
        <authorList>
            <person name="Wood D.W."/>
            <person name="Setubal J.C."/>
            <person name="Kaul R."/>
            <person name="Monks D.E."/>
            <person name="Kitajima J.P."/>
            <person name="Okura V.K."/>
            <person name="Zhou Y."/>
            <person name="Chen L."/>
            <person name="Wood G.E."/>
            <person name="Almeida N.F. Jr."/>
            <person name="Woo L."/>
            <person name="Chen Y."/>
            <person name="Paulsen I.T."/>
            <person name="Eisen J.A."/>
            <person name="Karp P.D."/>
            <person name="Bovee D. Sr."/>
            <person name="Chapman P."/>
            <person name="Clendenning J."/>
            <person name="Deatherage G."/>
            <person name="Gillet W."/>
            <person name="Grant C."/>
            <person name="Kutyavin T."/>
            <person name="Levy R."/>
            <person name="Li M.-J."/>
            <person name="McClelland E."/>
            <person name="Palmieri A."/>
            <person name="Raymond C."/>
            <person name="Rouse G."/>
            <person name="Saenphimmachak C."/>
            <person name="Wu Z."/>
            <person name="Romero P."/>
            <person name="Gordon D."/>
            <person name="Zhang S."/>
            <person name="Yoo H."/>
            <person name="Tao Y."/>
            <person name="Biddle P."/>
            <person name="Jung M."/>
            <person name="Krespan W."/>
            <person name="Perry M."/>
            <person name="Gordon-Kamm B."/>
            <person name="Liao L."/>
            <person name="Kim S."/>
            <person name="Hendrick C."/>
            <person name="Zhao Z.-Y."/>
            <person name="Dolan M."/>
            <person name="Chumley F."/>
            <person name="Tingey S.V."/>
            <person name="Tomb J.-F."/>
            <person name="Gordon M.P."/>
            <person name="Olson M.V."/>
            <person name="Nester E.W."/>
        </authorList>
    </citation>
    <scope>NUCLEOTIDE SEQUENCE [LARGE SCALE GENOMIC DNA]</scope>
    <source>
        <strain>C58 / ATCC 33970</strain>
    </source>
</reference>
<reference key="2">
    <citation type="journal article" date="2001" name="Science">
        <title>Genome sequence of the plant pathogen and biotechnology agent Agrobacterium tumefaciens C58.</title>
        <authorList>
            <person name="Goodner B."/>
            <person name="Hinkle G."/>
            <person name="Gattung S."/>
            <person name="Miller N."/>
            <person name="Blanchard M."/>
            <person name="Qurollo B."/>
            <person name="Goldman B.S."/>
            <person name="Cao Y."/>
            <person name="Askenazi M."/>
            <person name="Halling C."/>
            <person name="Mullin L."/>
            <person name="Houmiel K."/>
            <person name="Gordon J."/>
            <person name="Vaudin M."/>
            <person name="Iartchouk O."/>
            <person name="Epp A."/>
            <person name="Liu F."/>
            <person name="Wollam C."/>
            <person name="Allinger M."/>
            <person name="Doughty D."/>
            <person name="Scott C."/>
            <person name="Lappas C."/>
            <person name="Markelz B."/>
            <person name="Flanagan C."/>
            <person name="Crowell C."/>
            <person name="Gurson J."/>
            <person name="Lomo C."/>
            <person name="Sear C."/>
            <person name="Strub G."/>
            <person name="Cielo C."/>
            <person name="Slater S."/>
        </authorList>
    </citation>
    <scope>NUCLEOTIDE SEQUENCE [LARGE SCALE GENOMIC DNA]</scope>
    <source>
        <strain>C58 / ATCC 33970</strain>
    </source>
</reference>
<keyword id="KW-0963">Cytoplasm</keyword>
<keyword id="KW-1185">Reference proteome</keyword>
<keyword id="KW-0690">Ribosome biogenesis</keyword>
<feature type="chain" id="PRO_0000181837" description="Ribosome maturation factor RimP">
    <location>
        <begin position="1"/>
        <end position="198"/>
    </location>
</feature>
<proteinExistence type="inferred from homology"/>
<gene>
    <name evidence="1" type="primary">rimP</name>
    <name type="ordered locus">Atu0090</name>
    <name type="ORF">AGR_C_138</name>
</gene>